<proteinExistence type="inferred from homology"/>
<feature type="chain" id="PRO_1000023264" description="Thymidylate kinase">
    <location>
        <begin position="1"/>
        <end position="230"/>
    </location>
</feature>
<feature type="binding site" evidence="1">
    <location>
        <begin position="20"/>
        <end position="27"/>
    </location>
    <ligand>
        <name>ATP</name>
        <dbReference type="ChEBI" id="CHEBI:30616"/>
    </ligand>
</feature>
<organism>
    <name type="scientific">Rhodopseudomonas palustris (strain ATCC BAA-98 / CGA009)</name>
    <dbReference type="NCBI Taxonomy" id="258594"/>
    <lineage>
        <taxon>Bacteria</taxon>
        <taxon>Pseudomonadati</taxon>
        <taxon>Pseudomonadota</taxon>
        <taxon>Alphaproteobacteria</taxon>
        <taxon>Hyphomicrobiales</taxon>
        <taxon>Nitrobacteraceae</taxon>
        <taxon>Rhodopseudomonas</taxon>
    </lineage>
</organism>
<comment type="function">
    <text evidence="1">Phosphorylation of dTMP to form dTDP in both de novo and salvage pathways of dTTP synthesis.</text>
</comment>
<comment type="catalytic activity">
    <reaction evidence="1">
        <text>dTMP + ATP = dTDP + ADP</text>
        <dbReference type="Rhea" id="RHEA:13517"/>
        <dbReference type="ChEBI" id="CHEBI:30616"/>
        <dbReference type="ChEBI" id="CHEBI:58369"/>
        <dbReference type="ChEBI" id="CHEBI:63528"/>
        <dbReference type="ChEBI" id="CHEBI:456216"/>
        <dbReference type="EC" id="2.7.4.9"/>
    </reaction>
</comment>
<comment type="similarity">
    <text evidence="1">Belongs to the thymidylate kinase family.</text>
</comment>
<name>KTHY_RHOPA</name>
<gene>
    <name evidence="1" type="primary">tmk</name>
    <name type="ordered locus">RPA2775</name>
</gene>
<accession>Q6N643</accession>
<protein>
    <recommendedName>
        <fullName evidence="1">Thymidylate kinase</fullName>
        <ecNumber evidence="1">2.7.4.9</ecNumber>
    </recommendedName>
    <alternativeName>
        <fullName evidence="1">dTMP kinase</fullName>
    </alternativeName>
</protein>
<keyword id="KW-0067">ATP-binding</keyword>
<keyword id="KW-0418">Kinase</keyword>
<keyword id="KW-0545">Nucleotide biosynthesis</keyword>
<keyword id="KW-0547">Nucleotide-binding</keyword>
<keyword id="KW-0808">Transferase</keyword>
<evidence type="ECO:0000255" key="1">
    <source>
        <dbReference type="HAMAP-Rule" id="MF_00165"/>
    </source>
</evidence>
<reference key="1">
    <citation type="journal article" date="2004" name="Nat. Biotechnol.">
        <title>Complete genome sequence of the metabolically versatile photosynthetic bacterium Rhodopseudomonas palustris.</title>
        <authorList>
            <person name="Larimer F.W."/>
            <person name="Chain P."/>
            <person name="Hauser L."/>
            <person name="Lamerdin J.E."/>
            <person name="Malfatti S."/>
            <person name="Do L."/>
            <person name="Land M.L."/>
            <person name="Pelletier D.A."/>
            <person name="Beatty J.T."/>
            <person name="Lang A.S."/>
            <person name="Tabita F.R."/>
            <person name="Gibson J.L."/>
            <person name="Hanson T.E."/>
            <person name="Bobst C."/>
            <person name="Torres y Torres J.L."/>
            <person name="Peres C."/>
            <person name="Harrison F.H."/>
            <person name="Gibson J."/>
            <person name="Harwood C.S."/>
        </authorList>
    </citation>
    <scope>NUCLEOTIDE SEQUENCE [LARGE SCALE GENOMIC DNA]</scope>
    <source>
        <strain>ATCC BAA-98 / CGA009</strain>
    </source>
</reference>
<dbReference type="EC" id="2.7.4.9" evidence="1"/>
<dbReference type="EMBL" id="BX572602">
    <property type="protein sequence ID" value="CAE28217.1"/>
    <property type="molecule type" value="Genomic_DNA"/>
</dbReference>
<dbReference type="RefSeq" id="WP_011158326.1">
    <property type="nucleotide sequence ID" value="NZ_CP116810.1"/>
</dbReference>
<dbReference type="SMR" id="Q6N643"/>
<dbReference type="STRING" id="258594.RPA2775"/>
<dbReference type="GeneID" id="66893852"/>
<dbReference type="eggNOG" id="COG0125">
    <property type="taxonomic scope" value="Bacteria"/>
</dbReference>
<dbReference type="HOGENOM" id="CLU_049131_0_0_5"/>
<dbReference type="PhylomeDB" id="Q6N643"/>
<dbReference type="GO" id="GO:0005829">
    <property type="term" value="C:cytosol"/>
    <property type="evidence" value="ECO:0007669"/>
    <property type="project" value="TreeGrafter"/>
</dbReference>
<dbReference type="GO" id="GO:0005524">
    <property type="term" value="F:ATP binding"/>
    <property type="evidence" value="ECO:0007669"/>
    <property type="project" value="UniProtKB-UniRule"/>
</dbReference>
<dbReference type="GO" id="GO:0004798">
    <property type="term" value="F:dTMP kinase activity"/>
    <property type="evidence" value="ECO:0007669"/>
    <property type="project" value="UniProtKB-UniRule"/>
</dbReference>
<dbReference type="GO" id="GO:0006233">
    <property type="term" value="P:dTDP biosynthetic process"/>
    <property type="evidence" value="ECO:0007669"/>
    <property type="project" value="InterPro"/>
</dbReference>
<dbReference type="GO" id="GO:0006235">
    <property type="term" value="P:dTTP biosynthetic process"/>
    <property type="evidence" value="ECO:0007669"/>
    <property type="project" value="UniProtKB-UniRule"/>
</dbReference>
<dbReference type="GO" id="GO:0006227">
    <property type="term" value="P:dUDP biosynthetic process"/>
    <property type="evidence" value="ECO:0007669"/>
    <property type="project" value="TreeGrafter"/>
</dbReference>
<dbReference type="CDD" id="cd01672">
    <property type="entry name" value="TMPK"/>
    <property type="match status" value="1"/>
</dbReference>
<dbReference type="FunFam" id="3.40.50.300:FF:000225">
    <property type="entry name" value="Thymidylate kinase"/>
    <property type="match status" value="1"/>
</dbReference>
<dbReference type="Gene3D" id="3.40.50.300">
    <property type="entry name" value="P-loop containing nucleotide triphosphate hydrolases"/>
    <property type="match status" value="1"/>
</dbReference>
<dbReference type="HAMAP" id="MF_00165">
    <property type="entry name" value="Thymidylate_kinase"/>
    <property type="match status" value="1"/>
</dbReference>
<dbReference type="InterPro" id="IPR027417">
    <property type="entry name" value="P-loop_NTPase"/>
</dbReference>
<dbReference type="InterPro" id="IPR039430">
    <property type="entry name" value="Thymidylate_kin-like_dom"/>
</dbReference>
<dbReference type="InterPro" id="IPR018095">
    <property type="entry name" value="Thymidylate_kin_CS"/>
</dbReference>
<dbReference type="InterPro" id="IPR018094">
    <property type="entry name" value="Thymidylate_kinase"/>
</dbReference>
<dbReference type="NCBIfam" id="TIGR00041">
    <property type="entry name" value="DTMP_kinase"/>
    <property type="match status" value="1"/>
</dbReference>
<dbReference type="PANTHER" id="PTHR10344">
    <property type="entry name" value="THYMIDYLATE KINASE"/>
    <property type="match status" value="1"/>
</dbReference>
<dbReference type="PANTHER" id="PTHR10344:SF4">
    <property type="entry name" value="UMP-CMP KINASE 2, MITOCHONDRIAL"/>
    <property type="match status" value="1"/>
</dbReference>
<dbReference type="Pfam" id="PF02223">
    <property type="entry name" value="Thymidylate_kin"/>
    <property type="match status" value="1"/>
</dbReference>
<dbReference type="SUPFAM" id="SSF52540">
    <property type="entry name" value="P-loop containing nucleoside triphosphate hydrolases"/>
    <property type="match status" value="1"/>
</dbReference>
<dbReference type="PROSITE" id="PS01331">
    <property type="entry name" value="THYMIDYLATE_KINASE"/>
    <property type="match status" value="1"/>
</dbReference>
<sequence length="230" mass="25143">MVQKKPINRSLRGRFITFEGGEGAGKSTQIRLLAKRLEKARLRTLVTREPGGSPGAEAIRSALLAGIGKLIGGADAEALLFAAARDDHVRTLIEPALARGEWVLCDRFYDSTRAYQGKLGAVSLDLLNALQQVTIGDMKPDLTVILDIPVEIGLARAAVRRGSETPDRFESEAIDFHRGLREVFRQIAAQEPERCVLIDANAEPEEVADRIWQAVRLRLLEPARAGAKSA</sequence>